<feature type="chain" id="PRO_0000246286" description="GPI-anchored wall transfer protein 1">
    <location>
        <begin position="1"/>
        <end position="500"/>
    </location>
</feature>
<feature type="transmembrane region" description="Helical" evidence="2">
    <location>
        <begin position="21"/>
        <end position="41"/>
    </location>
</feature>
<feature type="transmembrane region" description="Helical" evidence="2">
    <location>
        <begin position="47"/>
        <end position="67"/>
    </location>
</feature>
<feature type="transmembrane region" description="Helical" evidence="2">
    <location>
        <begin position="74"/>
        <end position="94"/>
    </location>
</feature>
<feature type="transmembrane region" description="Helical" evidence="2">
    <location>
        <begin position="133"/>
        <end position="153"/>
    </location>
</feature>
<feature type="transmembrane region" description="Helical" evidence="2">
    <location>
        <begin position="168"/>
        <end position="188"/>
    </location>
</feature>
<feature type="transmembrane region" description="Helical" evidence="2">
    <location>
        <begin position="249"/>
        <end position="269"/>
    </location>
</feature>
<feature type="transmembrane region" description="Helical" evidence="2">
    <location>
        <begin position="272"/>
        <end position="292"/>
    </location>
</feature>
<feature type="transmembrane region" description="Helical" evidence="2">
    <location>
        <begin position="311"/>
        <end position="331"/>
    </location>
</feature>
<feature type="transmembrane region" description="Helical" evidence="2">
    <location>
        <begin position="351"/>
        <end position="368"/>
    </location>
</feature>
<feature type="transmembrane region" description="Helical" evidence="2">
    <location>
        <begin position="389"/>
        <end position="409"/>
    </location>
</feature>
<feature type="transmembrane region" description="Helical" evidence="2">
    <location>
        <begin position="446"/>
        <end position="466"/>
    </location>
</feature>
<feature type="transmembrane region" description="Helical" evidence="2">
    <location>
        <begin position="471"/>
        <end position="491"/>
    </location>
</feature>
<feature type="region of interest" description="Disordered" evidence="3">
    <location>
        <begin position="100"/>
        <end position="128"/>
    </location>
</feature>
<feature type="glycosylation site" description="N-linked (GlcNAc...) asparagine" evidence="2">
    <location>
        <position position="369"/>
    </location>
</feature>
<protein>
    <recommendedName>
        <fullName>GPI-anchored wall transfer protein 1</fullName>
        <ecNumber>2.3.-.-</ecNumber>
    </recommendedName>
</protein>
<proteinExistence type="inferred from homology"/>
<gene>
    <name type="primary">gwt1</name>
    <name type="ORF">AO090005001245</name>
</gene>
<dbReference type="EC" id="2.3.-.-"/>
<dbReference type="EMBL" id="BA000049">
    <property type="protein sequence ID" value="BAE56191.1"/>
    <property type="molecule type" value="Genomic_DNA"/>
</dbReference>
<dbReference type="RefSeq" id="XP_001818193.1">
    <property type="nucleotide sequence ID" value="XM_001818141.1"/>
</dbReference>
<dbReference type="SMR" id="Q2UQH4"/>
<dbReference type="STRING" id="510516.Q2UQH4"/>
<dbReference type="GlyCosmos" id="Q2UQH4">
    <property type="glycosylation" value="1 site, No reported glycans"/>
</dbReference>
<dbReference type="EnsemblFungi" id="BAE56191">
    <property type="protein sequence ID" value="BAE56191"/>
    <property type="gene ID" value="AO090005001245"/>
</dbReference>
<dbReference type="GeneID" id="5990138"/>
<dbReference type="KEGG" id="aor:AO090005001245"/>
<dbReference type="VEuPathDB" id="FungiDB:AO090005001245"/>
<dbReference type="HOGENOM" id="CLU_020802_2_2_1"/>
<dbReference type="OMA" id="GLYVMQP"/>
<dbReference type="OrthoDB" id="94123at5052"/>
<dbReference type="UniPathway" id="UPA00196"/>
<dbReference type="Proteomes" id="UP000006564">
    <property type="component" value="Chromosome 1"/>
</dbReference>
<dbReference type="GO" id="GO:0005789">
    <property type="term" value="C:endoplasmic reticulum membrane"/>
    <property type="evidence" value="ECO:0007669"/>
    <property type="project" value="UniProtKB-SubCell"/>
</dbReference>
<dbReference type="GO" id="GO:0032216">
    <property type="term" value="F:glucosaminyl-phosphatidylinositol O-acyltransferase activity"/>
    <property type="evidence" value="ECO:0007669"/>
    <property type="project" value="TreeGrafter"/>
</dbReference>
<dbReference type="GO" id="GO:0006506">
    <property type="term" value="P:GPI anchor biosynthetic process"/>
    <property type="evidence" value="ECO:0007669"/>
    <property type="project" value="UniProtKB-UniPathway"/>
</dbReference>
<dbReference type="GO" id="GO:0072659">
    <property type="term" value="P:protein localization to plasma membrane"/>
    <property type="evidence" value="ECO:0007669"/>
    <property type="project" value="TreeGrafter"/>
</dbReference>
<dbReference type="InterPro" id="IPR009447">
    <property type="entry name" value="PIGW/GWT1"/>
</dbReference>
<dbReference type="PANTHER" id="PTHR20661">
    <property type="entry name" value="PHOSPHATIDYLINOSITOL-GLYCAN BIOSYNTHESIS CLASS W PROTEIN"/>
    <property type="match status" value="1"/>
</dbReference>
<dbReference type="PANTHER" id="PTHR20661:SF0">
    <property type="entry name" value="PHOSPHATIDYLINOSITOL-GLYCAN BIOSYNTHESIS CLASS W PROTEIN"/>
    <property type="match status" value="1"/>
</dbReference>
<dbReference type="Pfam" id="PF06423">
    <property type="entry name" value="GWT1"/>
    <property type="match status" value="1"/>
</dbReference>
<dbReference type="PIRSF" id="PIRSF017321">
    <property type="entry name" value="GWT1"/>
    <property type="match status" value="1"/>
</dbReference>
<comment type="function">
    <text evidence="1">Probable acetyltransferase, which acetylates the inositol ring of phosphatidylinositol during biosynthesis of GPI-anchor.</text>
</comment>
<comment type="pathway">
    <text>Glycolipid biosynthesis; glycosylphosphatidylinositol-anchor biosynthesis.</text>
</comment>
<comment type="subcellular location">
    <subcellularLocation>
        <location evidence="1">Endoplasmic reticulum membrane</location>
        <topology evidence="1">Multi-pass membrane protein</topology>
    </subcellularLocation>
</comment>
<comment type="similarity">
    <text evidence="4">Belongs to the PIGW family.</text>
</comment>
<evidence type="ECO:0000250" key="1"/>
<evidence type="ECO:0000255" key="2"/>
<evidence type="ECO:0000256" key="3">
    <source>
        <dbReference type="SAM" id="MobiDB-lite"/>
    </source>
</evidence>
<evidence type="ECO:0000305" key="4"/>
<accession>Q2UQH4</accession>
<keyword id="KW-0012">Acyltransferase</keyword>
<keyword id="KW-0256">Endoplasmic reticulum</keyword>
<keyword id="KW-0325">Glycoprotein</keyword>
<keyword id="KW-0337">GPI-anchor biosynthesis</keyword>
<keyword id="KW-0472">Membrane</keyword>
<keyword id="KW-1185">Reference proteome</keyword>
<keyword id="KW-0808">Transferase</keyword>
<keyword id="KW-0812">Transmembrane</keyword>
<keyword id="KW-1133">Transmembrane helix</keyword>
<reference key="1">
    <citation type="journal article" date="2005" name="Nature">
        <title>Genome sequencing and analysis of Aspergillus oryzae.</title>
        <authorList>
            <person name="Machida M."/>
            <person name="Asai K."/>
            <person name="Sano M."/>
            <person name="Tanaka T."/>
            <person name="Kumagai T."/>
            <person name="Terai G."/>
            <person name="Kusumoto K."/>
            <person name="Arima T."/>
            <person name="Akita O."/>
            <person name="Kashiwagi Y."/>
            <person name="Abe K."/>
            <person name="Gomi K."/>
            <person name="Horiuchi H."/>
            <person name="Kitamoto K."/>
            <person name="Kobayashi T."/>
            <person name="Takeuchi M."/>
            <person name="Denning D.W."/>
            <person name="Galagan J.E."/>
            <person name="Nierman W.C."/>
            <person name="Yu J."/>
            <person name="Archer D.B."/>
            <person name="Bennett J.W."/>
            <person name="Bhatnagar D."/>
            <person name="Cleveland T.E."/>
            <person name="Fedorova N.D."/>
            <person name="Gotoh O."/>
            <person name="Horikawa H."/>
            <person name="Hosoyama A."/>
            <person name="Ichinomiya M."/>
            <person name="Igarashi R."/>
            <person name="Iwashita K."/>
            <person name="Juvvadi P.R."/>
            <person name="Kato M."/>
            <person name="Kato Y."/>
            <person name="Kin T."/>
            <person name="Kokubun A."/>
            <person name="Maeda H."/>
            <person name="Maeyama N."/>
            <person name="Maruyama J."/>
            <person name="Nagasaki H."/>
            <person name="Nakajima T."/>
            <person name="Oda K."/>
            <person name="Okada K."/>
            <person name="Paulsen I."/>
            <person name="Sakamoto K."/>
            <person name="Sawano T."/>
            <person name="Takahashi M."/>
            <person name="Takase K."/>
            <person name="Terabayashi Y."/>
            <person name="Wortman J.R."/>
            <person name="Yamada O."/>
            <person name="Yamagata Y."/>
            <person name="Anazawa H."/>
            <person name="Hata Y."/>
            <person name="Koide Y."/>
            <person name="Komori T."/>
            <person name="Koyama Y."/>
            <person name="Minetoki T."/>
            <person name="Suharnan S."/>
            <person name="Tanaka A."/>
            <person name="Isono K."/>
            <person name="Kuhara S."/>
            <person name="Ogasawara N."/>
            <person name="Kikuchi H."/>
        </authorList>
    </citation>
    <scope>NUCLEOTIDE SEQUENCE [LARGE SCALE GENOMIC DNA]</scope>
    <source>
        <strain>ATCC 42149 / RIB 40</strain>
    </source>
</reference>
<sequence>MDSSYKARKEAFVSNLAGGSILEINAVTLVAPTSVLLWSVLQSRLSFFIPYGALALVTDFFLNVLPILFATTLYSSAPWTLNILLALPALILLFTSTPSRTQQKAKPPRPSAAAKKNTPKHASDSPEPLPVHPFLTTYRAAMMVITCVAILAVDFRIFPRRFAKAENWGTSLMDLGVGSFVFSSGVVSARSILKGRNSHSKKAGLWQRLAASARHSIPLLVLGLVRLYSVKGLDYAEHVTEYGVHWNFFFTLGLLPPFVEIFDALAAIIPSYEILSLGIVVLYQVALESTDLKSYILVSPRGPDLLSKNREGVFSFLGYLAIFLTGRAIGIRIIPRGTSASRSPQQARKSVLISLGLQTLVWTTLFVFNSTHAMGLGAGIPVSRRLANMPYVLWVSAFNNAQLFLFCLLESTFFPSIHRETGKDGELERTSFATSRIMTAFNKNGLALFLVANLLTGAVNLSVPTLDVTTAHAMVVLIAYVAMITGVALALDRANIKLSL</sequence>
<organism>
    <name type="scientific">Aspergillus oryzae (strain ATCC 42149 / RIB 40)</name>
    <name type="common">Yellow koji mold</name>
    <dbReference type="NCBI Taxonomy" id="510516"/>
    <lineage>
        <taxon>Eukaryota</taxon>
        <taxon>Fungi</taxon>
        <taxon>Dikarya</taxon>
        <taxon>Ascomycota</taxon>
        <taxon>Pezizomycotina</taxon>
        <taxon>Eurotiomycetes</taxon>
        <taxon>Eurotiomycetidae</taxon>
        <taxon>Eurotiales</taxon>
        <taxon>Aspergillaceae</taxon>
        <taxon>Aspergillus</taxon>
        <taxon>Aspergillus subgen. Circumdati</taxon>
    </lineage>
</organism>
<name>GWT1_ASPOR</name>